<comment type="function">
    <text evidence="1">One of several proteins that assist in the late maturation steps of the functional core of the 30S ribosomal subunit. Associates with free 30S ribosomal subunits (but not with 30S subunits that are part of 70S ribosomes or polysomes). Required for efficient processing of 16S rRNA. May interact with the 5'-terminal helix region of 16S rRNA.</text>
</comment>
<comment type="subunit">
    <text evidence="1">Monomer. Binds 30S ribosomal subunits, but not 50S ribosomal subunits or 70S ribosomes.</text>
</comment>
<comment type="subcellular location">
    <subcellularLocation>
        <location evidence="1">Cytoplasm</location>
    </subcellularLocation>
</comment>
<comment type="similarity">
    <text evidence="1">Belongs to the RbfA family.</text>
</comment>
<feature type="chain" id="PRO_0000102688" description="Ribosome-binding factor A">
    <location>
        <begin position="1"/>
        <end position="114"/>
    </location>
</feature>
<name>RBFA_LISMO</name>
<accession>Q8Y7F4</accession>
<organism>
    <name type="scientific">Listeria monocytogenes serovar 1/2a (strain ATCC BAA-679 / EGD-e)</name>
    <dbReference type="NCBI Taxonomy" id="169963"/>
    <lineage>
        <taxon>Bacteria</taxon>
        <taxon>Bacillati</taxon>
        <taxon>Bacillota</taxon>
        <taxon>Bacilli</taxon>
        <taxon>Bacillales</taxon>
        <taxon>Listeriaceae</taxon>
        <taxon>Listeria</taxon>
    </lineage>
</organism>
<keyword id="KW-0963">Cytoplasm</keyword>
<keyword id="KW-1185">Reference proteome</keyword>
<keyword id="KW-0690">Ribosome biogenesis</keyword>
<reference key="1">
    <citation type="journal article" date="2001" name="Science">
        <title>Comparative genomics of Listeria species.</title>
        <authorList>
            <person name="Glaser P."/>
            <person name="Frangeul L."/>
            <person name="Buchrieser C."/>
            <person name="Rusniok C."/>
            <person name="Amend A."/>
            <person name="Baquero F."/>
            <person name="Berche P."/>
            <person name="Bloecker H."/>
            <person name="Brandt P."/>
            <person name="Chakraborty T."/>
            <person name="Charbit A."/>
            <person name="Chetouani F."/>
            <person name="Couve E."/>
            <person name="de Daruvar A."/>
            <person name="Dehoux P."/>
            <person name="Domann E."/>
            <person name="Dominguez-Bernal G."/>
            <person name="Duchaud E."/>
            <person name="Durant L."/>
            <person name="Dussurget O."/>
            <person name="Entian K.-D."/>
            <person name="Fsihi H."/>
            <person name="Garcia-del Portillo F."/>
            <person name="Garrido P."/>
            <person name="Gautier L."/>
            <person name="Goebel W."/>
            <person name="Gomez-Lopez N."/>
            <person name="Hain T."/>
            <person name="Hauf J."/>
            <person name="Jackson D."/>
            <person name="Jones L.-M."/>
            <person name="Kaerst U."/>
            <person name="Kreft J."/>
            <person name="Kuhn M."/>
            <person name="Kunst F."/>
            <person name="Kurapkat G."/>
            <person name="Madueno E."/>
            <person name="Maitournam A."/>
            <person name="Mata Vicente J."/>
            <person name="Ng E."/>
            <person name="Nedjari H."/>
            <person name="Nordsiek G."/>
            <person name="Novella S."/>
            <person name="de Pablos B."/>
            <person name="Perez-Diaz J.-C."/>
            <person name="Purcell R."/>
            <person name="Remmel B."/>
            <person name="Rose M."/>
            <person name="Schlueter T."/>
            <person name="Simoes N."/>
            <person name="Tierrez A."/>
            <person name="Vazquez-Boland J.-A."/>
            <person name="Voss H."/>
            <person name="Wehland J."/>
            <person name="Cossart P."/>
        </authorList>
    </citation>
    <scope>NUCLEOTIDE SEQUENCE [LARGE SCALE GENOMIC DNA]</scope>
    <source>
        <strain>ATCC BAA-679 / EGD-e</strain>
    </source>
</reference>
<gene>
    <name evidence="1" type="primary">rbfA</name>
    <name type="ordered locus">lmo1327</name>
</gene>
<evidence type="ECO:0000255" key="1">
    <source>
        <dbReference type="HAMAP-Rule" id="MF_00003"/>
    </source>
</evidence>
<protein>
    <recommendedName>
        <fullName evidence="1">Ribosome-binding factor A</fullName>
    </recommendedName>
</protein>
<dbReference type="EMBL" id="AL591978">
    <property type="protein sequence ID" value="CAC99405.1"/>
    <property type="molecule type" value="Genomic_DNA"/>
</dbReference>
<dbReference type="PIR" id="AG1240">
    <property type="entry name" value="AG1240"/>
</dbReference>
<dbReference type="RefSeq" id="NP_464852.1">
    <property type="nucleotide sequence ID" value="NC_003210.1"/>
</dbReference>
<dbReference type="RefSeq" id="WP_003719600.1">
    <property type="nucleotide sequence ID" value="NZ_CP149495.1"/>
</dbReference>
<dbReference type="SMR" id="Q8Y7F4"/>
<dbReference type="STRING" id="169963.gene:17593984"/>
<dbReference type="PaxDb" id="169963-lmo1327"/>
<dbReference type="EnsemblBacteria" id="CAC99405">
    <property type="protein sequence ID" value="CAC99405"/>
    <property type="gene ID" value="CAC99405"/>
</dbReference>
<dbReference type="GeneID" id="93239203"/>
<dbReference type="GeneID" id="987713"/>
<dbReference type="KEGG" id="lmo:lmo1327"/>
<dbReference type="PATRIC" id="fig|169963.11.peg.1364"/>
<dbReference type="eggNOG" id="COG0858">
    <property type="taxonomic scope" value="Bacteria"/>
</dbReference>
<dbReference type="HOGENOM" id="CLU_089475_6_3_9"/>
<dbReference type="OrthoDB" id="307788at2"/>
<dbReference type="PhylomeDB" id="Q8Y7F4"/>
<dbReference type="BioCyc" id="LMON169963:LMO1327-MONOMER"/>
<dbReference type="Proteomes" id="UP000000817">
    <property type="component" value="Chromosome"/>
</dbReference>
<dbReference type="GO" id="GO:0005829">
    <property type="term" value="C:cytosol"/>
    <property type="evidence" value="ECO:0000318"/>
    <property type="project" value="GO_Central"/>
</dbReference>
<dbReference type="GO" id="GO:0043024">
    <property type="term" value="F:ribosomal small subunit binding"/>
    <property type="evidence" value="ECO:0000318"/>
    <property type="project" value="GO_Central"/>
</dbReference>
<dbReference type="GO" id="GO:0030490">
    <property type="term" value="P:maturation of SSU-rRNA"/>
    <property type="evidence" value="ECO:0007669"/>
    <property type="project" value="UniProtKB-UniRule"/>
</dbReference>
<dbReference type="GO" id="GO:0042254">
    <property type="term" value="P:ribosome biogenesis"/>
    <property type="evidence" value="ECO:0000318"/>
    <property type="project" value="GO_Central"/>
</dbReference>
<dbReference type="FunFam" id="3.30.300.20:FF:000009">
    <property type="entry name" value="Ribosome-binding factor A"/>
    <property type="match status" value="1"/>
</dbReference>
<dbReference type="Gene3D" id="3.30.300.20">
    <property type="match status" value="1"/>
</dbReference>
<dbReference type="HAMAP" id="MF_00003">
    <property type="entry name" value="RbfA"/>
    <property type="match status" value="1"/>
</dbReference>
<dbReference type="InterPro" id="IPR015946">
    <property type="entry name" value="KH_dom-like_a/b"/>
</dbReference>
<dbReference type="InterPro" id="IPR000238">
    <property type="entry name" value="RbfA"/>
</dbReference>
<dbReference type="InterPro" id="IPR023799">
    <property type="entry name" value="RbfA_dom_sf"/>
</dbReference>
<dbReference type="InterPro" id="IPR020053">
    <property type="entry name" value="Ribosome-bd_factorA_CS"/>
</dbReference>
<dbReference type="NCBIfam" id="TIGR00082">
    <property type="entry name" value="rbfA"/>
    <property type="match status" value="1"/>
</dbReference>
<dbReference type="PANTHER" id="PTHR33515">
    <property type="entry name" value="RIBOSOME-BINDING FACTOR A, CHLOROPLASTIC-RELATED"/>
    <property type="match status" value="1"/>
</dbReference>
<dbReference type="PANTHER" id="PTHR33515:SF1">
    <property type="entry name" value="RIBOSOME-BINDING FACTOR A, CHLOROPLASTIC-RELATED"/>
    <property type="match status" value="1"/>
</dbReference>
<dbReference type="Pfam" id="PF02033">
    <property type="entry name" value="RBFA"/>
    <property type="match status" value="1"/>
</dbReference>
<dbReference type="SUPFAM" id="SSF89919">
    <property type="entry name" value="Ribosome-binding factor A, RbfA"/>
    <property type="match status" value="1"/>
</dbReference>
<dbReference type="PROSITE" id="PS01319">
    <property type="entry name" value="RBFA"/>
    <property type="match status" value="1"/>
</dbReference>
<sequence>MNVRANRVSEQMKKELGDILNRKIKDPRLGFVTVTGVDVTGDLQEAKVFISILGTDKEKENTLLALAKAHGFIRSEIGRRIRLRKVPEMSFEIDNSIAYGNRIDELLRDLNNDQ</sequence>
<proteinExistence type="inferred from homology"/>